<accession>C1AL51</accession>
<name>RS14Z_MYCBT</name>
<evidence type="ECO:0000255" key="1">
    <source>
        <dbReference type="HAMAP-Rule" id="MF_01364"/>
    </source>
</evidence>
<evidence type="ECO:0000305" key="2"/>
<proteinExistence type="inferred from homology"/>
<sequence length="61" mass="6825">MAKKALVNKAAGKPRFAVRAYTRCSKCGRPRAVYRKFGLCRICLREMAHAGELPGVQKSSW</sequence>
<feature type="chain" id="PRO_1000166774" description="Small ribosomal subunit protein uS14">
    <location>
        <begin position="1"/>
        <end position="61"/>
    </location>
</feature>
<feature type="binding site" evidence="1">
    <location>
        <position position="24"/>
    </location>
    <ligand>
        <name>Zn(2+)</name>
        <dbReference type="ChEBI" id="CHEBI:29105"/>
    </ligand>
</feature>
<feature type="binding site" evidence="1">
    <location>
        <position position="27"/>
    </location>
    <ligand>
        <name>Zn(2+)</name>
        <dbReference type="ChEBI" id="CHEBI:29105"/>
    </ligand>
</feature>
<feature type="binding site" evidence="1">
    <location>
        <position position="40"/>
    </location>
    <ligand>
        <name>Zn(2+)</name>
        <dbReference type="ChEBI" id="CHEBI:29105"/>
    </ligand>
</feature>
<feature type="binding site" evidence="1">
    <location>
        <position position="43"/>
    </location>
    <ligand>
        <name>Zn(2+)</name>
        <dbReference type="ChEBI" id="CHEBI:29105"/>
    </ligand>
</feature>
<reference key="1">
    <citation type="journal article" date="2009" name="Vaccine">
        <title>Whole genome sequence analysis of Mycobacterium bovis bacillus Calmette-Guerin (BCG) Tokyo 172: a comparative study of BCG vaccine substrains.</title>
        <authorList>
            <person name="Seki M."/>
            <person name="Honda I."/>
            <person name="Fujita I."/>
            <person name="Yano I."/>
            <person name="Yamamoto S."/>
            <person name="Koyama A."/>
        </authorList>
    </citation>
    <scope>NUCLEOTIDE SEQUENCE [LARGE SCALE GENOMIC DNA]</scope>
    <source>
        <strain>BCG / Tokyo 172 / ATCC 35737 / TMC 1019</strain>
    </source>
</reference>
<organism>
    <name type="scientific">Mycobacterium bovis (strain BCG / Tokyo 172 / ATCC 35737 / TMC 1019)</name>
    <dbReference type="NCBI Taxonomy" id="561275"/>
    <lineage>
        <taxon>Bacteria</taxon>
        <taxon>Bacillati</taxon>
        <taxon>Actinomycetota</taxon>
        <taxon>Actinomycetes</taxon>
        <taxon>Mycobacteriales</taxon>
        <taxon>Mycobacteriaceae</taxon>
        <taxon>Mycobacterium</taxon>
        <taxon>Mycobacterium tuberculosis complex</taxon>
    </lineage>
</organism>
<comment type="function">
    <text evidence="1">Binds 16S rRNA, required for the assembly of 30S particles and may also be responsible for determining the conformation of the 16S rRNA at the A site.</text>
</comment>
<comment type="cofactor">
    <cofactor evidence="1">
        <name>Zn(2+)</name>
        <dbReference type="ChEBI" id="CHEBI:29105"/>
    </cofactor>
    <text evidence="1">Binds 1 zinc ion per subunit.</text>
</comment>
<comment type="subunit">
    <text evidence="1">Part of the 30S ribosomal subunit. Contacts proteins S3 and S10.</text>
</comment>
<comment type="similarity">
    <text evidence="1">Belongs to the universal ribosomal protein uS14 family. Zinc-binding uS14 subfamily.</text>
</comment>
<gene>
    <name evidence="1" type="primary">rpsZ</name>
    <name evidence="1" type="synonym">rpsN</name>
    <name type="ordered locus">JTY_0737</name>
</gene>
<keyword id="KW-0479">Metal-binding</keyword>
<keyword id="KW-0687">Ribonucleoprotein</keyword>
<keyword id="KW-0689">Ribosomal protein</keyword>
<keyword id="KW-0694">RNA-binding</keyword>
<keyword id="KW-0699">rRNA-binding</keyword>
<keyword id="KW-0862">Zinc</keyword>
<dbReference type="EMBL" id="AP010918">
    <property type="protein sequence ID" value="BAH25030.1"/>
    <property type="molecule type" value="Genomic_DNA"/>
</dbReference>
<dbReference type="RefSeq" id="WP_003403667.1">
    <property type="nucleotide sequence ID" value="NZ_CP014566.1"/>
</dbReference>
<dbReference type="SMR" id="C1AL51"/>
<dbReference type="KEGG" id="mbt:JTY_0737"/>
<dbReference type="HOGENOM" id="CLU_139869_3_0_11"/>
<dbReference type="GO" id="GO:0005737">
    <property type="term" value="C:cytoplasm"/>
    <property type="evidence" value="ECO:0007669"/>
    <property type="project" value="UniProtKB-ARBA"/>
</dbReference>
<dbReference type="GO" id="GO:0015935">
    <property type="term" value="C:small ribosomal subunit"/>
    <property type="evidence" value="ECO:0007669"/>
    <property type="project" value="TreeGrafter"/>
</dbReference>
<dbReference type="GO" id="GO:0019843">
    <property type="term" value="F:rRNA binding"/>
    <property type="evidence" value="ECO:0007669"/>
    <property type="project" value="UniProtKB-UniRule"/>
</dbReference>
<dbReference type="GO" id="GO:0003735">
    <property type="term" value="F:structural constituent of ribosome"/>
    <property type="evidence" value="ECO:0007669"/>
    <property type="project" value="InterPro"/>
</dbReference>
<dbReference type="GO" id="GO:0008270">
    <property type="term" value="F:zinc ion binding"/>
    <property type="evidence" value="ECO:0007669"/>
    <property type="project" value="UniProtKB-UniRule"/>
</dbReference>
<dbReference type="GO" id="GO:0006412">
    <property type="term" value="P:translation"/>
    <property type="evidence" value="ECO:0007669"/>
    <property type="project" value="UniProtKB-UniRule"/>
</dbReference>
<dbReference type="FunFam" id="4.10.830.10:FF:000001">
    <property type="entry name" value="30S ribosomal protein S14 type Z"/>
    <property type="match status" value="1"/>
</dbReference>
<dbReference type="Gene3D" id="4.10.830.10">
    <property type="entry name" value="30s Ribosomal Protein S14, Chain N"/>
    <property type="match status" value="1"/>
</dbReference>
<dbReference type="HAMAP" id="MF_01364_B">
    <property type="entry name" value="Ribosomal_uS14_2_B"/>
    <property type="match status" value="1"/>
</dbReference>
<dbReference type="InterPro" id="IPR001209">
    <property type="entry name" value="Ribosomal_uS14"/>
</dbReference>
<dbReference type="InterPro" id="IPR023053">
    <property type="entry name" value="Ribosomal_uS14_bact"/>
</dbReference>
<dbReference type="InterPro" id="IPR018271">
    <property type="entry name" value="Ribosomal_uS14_CS"/>
</dbReference>
<dbReference type="InterPro" id="IPR043140">
    <property type="entry name" value="Ribosomal_uS14_sf"/>
</dbReference>
<dbReference type="NCBIfam" id="NF005974">
    <property type="entry name" value="PRK08061.1"/>
    <property type="match status" value="1"/>
</dbReference>
<dbReference type="PANTHER" id="PTHR19836">
    <property type="entry name" value="30S RIBOSOMAL PROTEIN S14"/>
    <property type="match status" value="1"/>
</dbReference>
<dbReference type="PANTHER" id="PTHR19836:SF19">
    <property type="entry name" value="SMALL RIBOSOMAL SUBUNIT PROTEIN US14M"/>
    <property type="match status" value="1"/>
</dbReference>
<dbReference type="Pfam" id="PF00253">
    <property type="entry name" value="Ribosomal_S14"/>
    <property type="match status" value="1"/>
</dbReference>
<dbReference type="SUPFAM" id="SSF57716">
    <property type="entry name" value="Glucocorticoid receptor-like (DNA-binding domain)"/>
    <property type="match status" value="1"/>
</dbReference>
<dbReference type="PROSITE" id="PS00527">
    <property type="entry name" value="RIBOSOMAL_S14"/>
    <property type="match status" value="1"/>
</dbReference>
<protein>
    <recommendedName>
        <fullName evidence="1">Small ribosomal subunit protein uS14</fullName>
    </recommendedName>
    <alternativeName>
        <fullName evidence="2">30S ribosomal protein S14 type Z</fullName>
    </alternativeName>
</protein>